<protein>
    <recommendedName>
        <fullName>Toxin-like structure LSTX-D7</fullName>
    </recommendedName>
</protein>
<sequence length="106" mass="12047">MMKVLVVFALLVTLISYSSSEGIDDLEADELLSLMANEQTRAKACTPRYYDCSHDRHSCCRSSMFKDVCTCFYPEGGDNKEVCTCQQPKHLKYMEKATDKIKNLFG</sequence>
<comment type="subcellular location">
    <subcellularLocation>
        <location evidence="1">Secreted</location>
    </subcellularLocation>
</comment>
<comment type="tissue specificity">
    <text>Expressed by the venom gland.</text>
</comment>
<comment type="domain">
    <text evidence="1">The presence of a 'disulfide through disulfide knot' structurally defines this protein as a knottin.</text>
</comment>
<comment type="similarity">
    <text evidence="3">Belongs to the neurotoxin 19 (CSTX) family. 02 (D7) subfamily.</text>
</comment>
<name>TXZ07_LYCSI</name>
<reference key="1">
    <citation type="journal article" date="2010" name="Zoology">
        <title>Transcriptome analysis of the venom glands of the Chinese wolf spider Lycosa singoriensis.</title>
        <authorList>
            <person name="Zhang Y."/>
            <person name="Chen J."/>
            <person name="Tang X."/>
            <person name="Wang F."/>
            <person name="Jiang L."/>
            <person name="Xiong X."/>
            <person name="Wang M."/>
            <person name="Rong M."/>
            <person name="Liu Z."/>
            <person name="Liang S."/>
        </authorList>
    </citation>
    <scope>NUCLEOTIDE SEQUENCE [LARGE SCALE MRNA]</scope>
    <source>
        <tissue>Venom gland</tissue>
    </source>
</reference>
<dbReference type="EMBL" id="EU926030">
    <property type="protein sequence ID" value="ACI41362.1"/>
    <property type="molecule type" value="mRNA"/>
</dbReference>
<dbReference type="EMBL" id="FM864034">
    <property type="protein sequence ID" value="CAS03631.1"/>
    <property type="molecule type" value="mRNA"/>
</dbReference>
<dbReference type="SMR" id="B6DCU6"/>
<dbReference type="ArachnoServer" id="AS001741">
    <property type="toxin name" value="U3-lycotoxin-Ls1z"/>
</dbReference>
<dbReference type="GO" id="GO:0005576">
    <property type="term" value="C:extracellular region"/>
    <property type="evidence" value="ECO:0007669"/>
    <property type="project" value="UniProtKB-SubCell"/>
</dbReference>
<dbReference type="GO" id="GO:0090729">
    <property type="term" value="F:toxin activity"/>
    <property type="evidence" value="ECO:0007669"/>
    <property type="project" value="UniProtKB-KW"/>
</dbReference>
<dbReference type="InterPro" id="IPR019553">
    <property type="entry name" value="Spider_toxin_CSTX_knottin"/>
</dbReference>
<dbReference type="InterPro" id="IPR011142">
    <property type="entry name" value="Spider_toxin_CSTX_Knottin_CS"/>
</dbReference>
<dbReference type="Pfam" id="PF10530">
    <property type="entry name" value="Toxin_35"/>
    <property type="match status" value="1"/>
</dbReference>
<dbReference type="PROSITE" id="PS60029">
    <property type="entry name" value="SPIDER_CSTX"/>
    <property type="match status" value="1"/>
</dbReference>
<feature type="signal peptide" evidence="2">
    <location>
        <begin position="1"/>
        <end position="20"/>
    </location>
</feature>
<feature type="propeptide" id="PRO_0000401705" evidence="1">
    <location>
        <begin position="21"/>
        <end position="41"/>
    </location>
</feature>
<feature type="chain" id="PRO_0000401706" description="Toxin-like structure LSTX-D7">
    <location>
        <begin position="42"/>
        <end position="106"/>
    </location>
</feature>
<feature type="disulfide bond" evidence="1">
    <location>
        <begin position="45"/>
        <end position="60"/>
    </location>
</feature>
<feature type="disulfide bond" evidence="1">
    <location>
        <begin position="52"/>
        <end position="69"/>
    </location>
</feature>
<feature type="disulfide bond" evidence="1">
    <location>
        <begin position="59"/>
        <end position="85"/>
    </location>
</feature>
<feature type="disulfide bond" evidence="1">
    <location>
        <begin position="71"/>
        <end position="83"/>
    </location>
</feature>
<keyword id="KW-1015">Disulfide bond</keyword>
<keyword id="KW-0960">Knottin</keyword>
<keyword id="KW-0964">Secreted</keyword>
<keyword id="KW-0732">Signal</keyword>
<keyword id="KW-0800">Toxin</keyword>
<accession>B6DCU6</accession>
<evidence type="ECO:0000250" key="1"/>
<evidence type="ECO:0000255" key="2"/>
<evidence type="ECO:0000305" key="3"/>
<proteinExistence type="evidence at transcript level"/>
<organism>
    <name type="scientific">Lycosa singoriensis</name>
    <name type="common">Wolf spider</name>
    <name type="synonym">Aranea singoriensis</name>
    <dbReference type="NCBI Taxonomy" id="434756"/>
    <lineage>
        <taxon>Eukaryota</taxon>
        <taxon>Metazoa</taxon>
        <taxon>Ecdysozoa</taxon>
        <taxon>Arthropoda</taxon>
        <taxon>Chelicerata</taxon>
        <taxon>Arachnida</taxon>
        <taxon>Araneae</taxon>
        <taxon>Araneomorphae</taxon>
        <taxon>Entelegynae</taxon>
        <taxon>Lycosoidea</taxon>
        <taxon>Lycosidae</taxon>
        <taxon>Lycosa</taxon>
    </lineage>
</organism>